<dbReference type="EC" id="2.7.11.1"/>
<dbReference type="EMBL" id="U44902">
    <property type="protein sequence ID" value="AAA93318.1"/>
    <property type="status" value="ALT_FRAME"/>
    <property type="molecule type" value="mRNA"/>
</dbReference>
<dbReference type="EMBL" id="BX284605">
    <property type="protein sequence ID" value="CCD73287.1"/>
    <property type="molecule type" value="Genomic_DNA"/>
</dbReference>
<dbReference type="EMBL" id="BX284605">
    <property type="protein sequence ID" value="CCD73288.1"/>
    <property type="status" value="ALT_INIT"/>
    <property type="molecule type" value="Genomic_DNA"/>
</dbReference>
<dbReference type="RefSeq" id="NP_001024233.1">
    <property type="nucleotide sequence ID" value="NM_001029062.3"/>
</dbReference>
<dbReference type="RefSeq" id="NP_001024234.1">
    <property type="nucleotide sequence ID" value="NM_001029063.2"/>
</dbReference>
<dbReference type="RefSeq" id="NP_001380036.1">
    <molecule id="Q9N3Z3-1"/>
    <property type="nucleotide sequence ID" value="NM_001392496.1"/>
</dbReference>
<dbReference type="SMR" id="Q9N3Z3"/>
<dbReference type="BioGRID" id="533239">
    <property type="interactions" value="15"/>
</dbReference>
<dbReference type="FunCoup" id="Q9N3Z3">
    <property type="interactions" value="2733"/>
</dbReference>
<dbReference type="IntAct" id="Q9N3Z3">
    <property type="interactions" value="2"/>
</dbReference>
<dbReference type="MINT" id="Q9N3Z3"/>
<dbReference type="STRING" id="6239.Y39H10A.7a.1"/>
<dbReference type="iPTMnet" id="Q9N3Z3"/>
<dbReference type="PaxDb" id="6239-Y39H10A.7a.2"/>
<dbReference type="PeptideAtlas" id="Q9N3Z3"/>
<dbReference type="EnsemblMetazoa" id="Y39H10A.7a.1">
    <molecule id="Q9N3Z3-1"/>
    <property type="protein sequence ID" value="Y39H10A.7a.1"/>
    <property type="gene ID" value="WBGene00000498"/>
</dbReference>
<dbReference type="EnsemblMetazoa" id="Y39H10A.7b.1">
    <property type="protein sequence ID" value="Y39H10A.7b.1"/>
    <property type="gene ID" value="WBGene00000498"/>
</dbReference>
<dbReference type="GeneID" id="3565921"/>
<dbReference type="KEGG" id="cel:CELE_Y39H10A.7"/>
<dbReference type="UCSC" id="Y39H10A.7a">
    <molecule id="Q9N3Z3-1"/>
    <property type="organism name" value="c. elegans"/>
</dbReference>
<dbReference type="AGR" id="WB:WBGene00000498"/>
<dbReference type="CTD" id="3565921"/>
<dbReference type="WormBase" id="Y39H10A.7a">
    <molecule id="Q9N3Z3-1"/>
    <property type="protein sequence ID" value="CE26076"/>
    <property type="gene ID" value="WBGene00000498"/>
    <property type="gene designation" value="chk-1"/>
</dbReference>
<dbReference type="WormBase" id="Y39H10A.7b">
    <molecule id="Q9N3Z3-2"/>
    <property type="protein sequence ID" value="CE33867"/>
    <property type="gene ID" value="WBGene00000498"/>
    <property type="gene designation" value="chk-1"/>
</dbReference>
<dbReference type="eggNOG" id="KOG0590">
    <property type="taxonomic scope" value="Eukaryota"/>
</dbReference>
<dbReference type="GeneTree" id="ENSGT00940000167959"/>
<dbReference type="InParanoid" id="Q9N3Z3"/>
<dbReference type="OMA" id="MVDCRRS"/>
<dbReference type="OrthoDB" id="539158at2759"/>
<dbReference type="PhylomeDB" id="Q9N3Z3"/>
<dbReference type="Reactome" id="R-CEL-176187">
    <property type="pathway name" value="Activation of ATR in response to replication stress"/>
</dbReference>
<dbReference type="Reactome" id="R-CEL-5693616">
    <property type="pathway name" value="Presynaptic phase of homologous DNA pairing and strand exchange"/>
</dbReference>
<dbReference type="Reactome" id="R-CEL-69601">
    <property type="pathway name" value="Ubiquitin Mediated Degradation of Phosphorylated Cdc25A"/>
</dbReference>
<dbReference type="PRO" id="PR:Q9N3Z3"/>
<dbReference type="Proteomes" id="UP000001940">
    <property type="component" value="Chromosome V"/>
</dbReference>
<dbReference type="Bgee" id="WBGene00000498">
    <property type="expression patterns" value="Expressed in germ line (C elegans) and 4 other cell types or tissues"/>
</dbReference>
<dbReference type="GO" id="GO:0005634">
    <property type="term" value="C:nucleus"/>
    <property type="evidence" value="ECO:0007669"/>
    <property type="project" value="UniProtKB-SubCell"/>
</dbReference>
<dbReference type="GO" id="GO:0048471">
    <property type="term" value="C:perinuclear region of cytoplasm"/>
    <property type="evidence" value="ECO:0007669"/>
    <property type="project" value="UniProtKB-SubCell"/>
</dbReference>
<dbReference type="GO" id="GO:0005524">
    <property type="term" value="F:ATP binding"/>
    <property type="evidence" value="ECO:0007669"/>
    <property type="project" value="UniProtKB-KW"/>
</dbReference>
<dbReference type="GO" id="GO:0035402">
    <property type="term" value="F:histone H3T11 kinase activity"/>
    <property type="evidence" value="ECO:0000318"/>
    <property type="project" value="GO_Central"/>
</dbReference>
<dbReference type="GO" id="GO:0106310">
    <property type="term" value="F:protein serine kinase activity"/>
    <property type="evidence" value="ECO:0007669"/>
    <property type="project" value="RHEA"/>
</dbReference>
<dbReference type="GO" id="GO:0009792">
    <property type="term" value="P:embryo development ending in birth or egg hatching"/>
    <property type="evidence" value="ECO:0000316"/>
    <property type="project" value="UniProtKB"/>
</dbReference>
<dbReference type="GO" id="GO:0033314">
    <property type="term" value="P:mitotic DNA replication checkpoint signaling"/>
    <property type="evidence" value="ECO:0000315"/>
    <property type="project" value="WormBase"/>
</dbReference>
<dbReference type="GO" id="GO:0007095">
    <property type="term" value="P:mitotic G2 DNA damage checkpoint signaling"/>
    <property type="evidence" value="ECO:0000318"/>
    <property type="project" value="GO_Central"/>
</dbReference>
<dbReference type="CDD" id="cd14069">
    <property type="entry name" value="STKc_Chk1"/>
    <property type="match status" value="1"/>
</dbReference>
<dbReference type="FunFam" id="1.10.510.10:FF:000707">
    <property type="entry name" value="CAMK/CAMKL/CHK1 protein kinase"/>
    <property type="match status" value="1"/>
</dbReference>
<dbReference type="FunFam" id="3.30.200.20:FF:000229">
    <property type="entry name" value="Serine/threonine-protein kinase Chk1"/>
    <property type="match status" value="1"/>
</dbReference>
<dbReference type="Gene3D" id="1.10.510.10">
    <property type="entry name" value="Transferase(Phosphotransferase) domain 1"/>
    <property type="match status" value="1"/>
</dbReference>
<dbReference type="InterPro" id="IPR034670">
    <property type="entry name" value="Chk1_catalytic_dom"/>
</dbReference>
<dbReference type="InterPro" id="IPR011009">
    <property type="entry name" value="Kinase-like_dom_sf"/>
</dbReference>
<dbReference type="InterPro" id="IPR000719">
    <property type="entry name" value="Prot_kinase_dom"/>
</dbReference>
<dbReference type="InterPro" id="IPR017441">
    <property type="entry name" value="Protein_kinase_ATP_BS"/>
</dbReference>
<dbReference type="InterPro" id="IPR008271">
    <property type="entry name" value="Ser/Thr_kinase_AS"/>
</dbReference>
<dbReference type="PANTHER" id="PTHR24346">
    <property type="entry name" value="MAP/MICROTUBULE AFFINITY-REGULATING KINASE"/>
    <property type="match status" value="1"/>
</dbReference>
<dbReference type="PANTHER" id="PTHR24346:SF107">
    <property type="entry name" value="SERINE_THREONINE-PROTEIN KINASE CHK1"/>
    <property type="match status" value="1"/>
</dbReference>
<dbReference type="Pfam" id="PF00069">
    <property type="entry name" value="Pkinase"/>
    <property type="match status" value="1"/>
</dbReference>
<dbReference type="SMART" id="SM00220">
    <property type="entry name" value="S_TKc"/>
    <property type="match status" value="1"/>
</dbReference>
<dbReference type="SUPFAM" id="SSF56112">
    <property type="entry name" value="Protein kinase-like (PK-like)"/>
    <property type="match status" value="1"/>
</dbReference>
<dbReference type="PROSITE" id="PS00107">
    <property type="entry name" value="PROTEIN_KINASE_ATP"/>
    <property type="match status" value="1"/>
</dbReference>
<dbReference type="PROSITE" id="PS50011">
    <property type="entry name" value="PROTEIN_KINASE_DOM"/>
    <property type="match status" value="1"/>
</dbReference>
<dbReference type="PROSITE" id="PS00108">
    <property type="entry name" value="PROTEIN_KINASE_ST"/>
    <property type="match status" value="1"/>
</dbReference>
<gene>
    <name evidence="9" type="primary">chk-1</name>
    <name evidence="9" type="ORF">Y39H10A.7</name>
</gene>
<protein>
    <recommendedName>
        <fullName>Serine/threonine-protein kinase chk-1</fullName>
        <ecNumber>2.7.11.1</ecNumber>
    </recommendedName>
</protein>
<keyword id="KW-0025">Alternative splicing</keyword>
<keyword id="KW-0067">ATP-binding</keyword>
<keyword id="KW-0131">Cell cycle</keyword>
<keyword id="KW-0963">Cytoplasm</keyword>
<keyword id="KW-0217">Developmental protein</keyword>
<keyword id="KW-0227">DNA damage</keyword>
<keyword id="KW-0418">Kinase</keyword>
<keyword id="KW-0547">Nucleotide-binding</keyword>
<keyword id="KW-0539">Nucleus</keyword>
<keyword id="KW-0597">Phosphoprotein</keyword>
<keyword id="KW-1185">Reference proteome</keyword>
<keyword id="KW-0723">Serine/threonine-protein kinase</keyword>
<keyword id="KW-0808">Transferase</keyword>
<proteinExistence type="evidence at protein level"/>
<accession>Q9N3Z3</accession>
<accession>Q17375</accession>
<accession>Q86FM7</accession>
<feature type="chain" id="PRO_0000085854" description="Serine/threonine-protein kinase chk-1">
    <location>
        <begin position="1"/>
        <end position="503"/>
    </location>
</feature>
<feature type="domain" description="Protein kinase" evidence="2">
    <location>
        <begin position="24"/>
        <end position="286"/>
    </location>
</feature>
<feature type="region of interest" description="Disordered" evidence="4">
    <location>
        <begin position="320"/>
        <end position="346"/>
    </location>
</feature>
<feature type="compositionally biased region" description="Polar residues" evidence="4">
    <location>
        <begin position="331"/>
        <end position="346"/>
    </location>
</feature>
<feature type="active site" description="Proton acceptor" evidence="2 3">
    <location>
        <position position="150"/>
    </location>
</feature>
<feature type="binding site" evidence="2">
    <location>
        <begin position="30"/>
        <end position="38"/>
    </location>
    <ligand>
        <name>ATP</name>
        <dbReference type="ChEBI" id="CHEBI:30616"/>
    </ligand>
</feature>
<feature type="binding site" evidence="2">
    <location>
        <position position="54"/>
    </location>
    <ligand>
        <name>ATP</name>
        <dbReference type="ChEBI" id="CHEBI:30616"/>
    </ligand>
</feature>
<feature type="modified residue" description="Phosphoserine" evidence="6">
    <location>
        <position position="344"/>
    </location>
</feature>
<feature type="splice variant" id="VSP_015771" description="In isoform b." evidence="8">
    <location>
        <begin position="1"/>
        <end position="89"/>
    </location>
</feature>
<feature type="sequence conflict" description="In Ref. 1; AAA93318." evidence="8" ref="1">
    <original>V</original>
    <variation>L</variation>
    <location>
        <position position="402"/>
    </location>
</feature>
<sequence>MSAASTTSTPAAAAVAPQQPESLYRVVQTLGEGAFGEVLLIVNTKNPEVAAAMKKINIANKSKDFIDNIRKEYLLQKRVSAVGHDNVIRMIGMRNDPQFYYLFLEYADGGELFDKIEPDCGMSPVFAQFYFKQLICGLKFIHDNDVVHRDIKPENLLLTGTHVLKISDFGMATLYRNKGEERLLDLSCGTIPYAAPELCAGKKYRGPPVDVWSSGIVLIAMLTGELPWDRASDASQSYMGWISNTSLDERPWKKIDVRALCMLRKIVTDKTDKRATIEQIQADPWYQHNFGQVETPNGRPLKRARNNDENITCTQQAECSAKRRHLETPNEKSTLAERQNASFSQPTKTEDLLLTQHIDMSQTNSNLLQRMVCRMTRFCVVTDIRSTYQKVARASEHAGFGVRETDDYRLLVTWREVSMMVSLYTMGDIPDKPRVMVDFRRSRGDGIQFKKMFMDVRNRMHEWICTDGNNWLANLGYVPRNPQIVNGGGVNVEHSASSINVDV</sequence>
<reference key="1">
    <citation type="submission" date="1996-01" db="EMBL/GenBank/DDBJ databases">
        <authorList>
            <person name="Winge P."/>
            <person name="Goebel V."/>
            <person name="Fleming J.T."/>
        </authorList>
    </citation>
    <scope>NUCLEOTIDE SEQUENCE [MRNA] (ISOFORM A)</scope>
</reference>
<reference key="2">
    <citation type="journal article" date="1998" name="Science">
        <title>Genome sequence of the nematode C. elegans: a platform for investigating biology.</title>
        <authorList>
            <consortium name="The C. elegans sequencing consortium"/>
        </authorList>
    </citation>
    <scope>NUCLEOTIDE SEQUENCE [LARGE SCALE GENOMIC DNA]</scope>
    <source>
        <strain>Bristol N2</strain>
    </source>
</reference>
<reference key="3">
    <citation type="journal article" date="2004" name="Cell Cycle">
        <title>chk-1 is an essential gene and is required for an S-M checkpoint during early embryogenesis.</title>
        <authorList>
            <person name="Kalogeropoulos N."/>
            <person name="Christoforou C."/>
            <person name="Green A.J."/>
            <person name="Gill S."/>
            <person name="Ashcroft N.R."/>
        </authorList>
    </citation>
    <scope>FUNCTION</scope>
    <scope>TISSUE SPECIFICITY</scope>
    <scope>DEVELOPMENTAL STAGE</scope>
</reference>
<reference key="4">
    <citation type="journal article" date="2015" name="Dev. Cell">
        <title>Zygotic genome activation triggers chromosome damage and checkpoint signaling in C. elegans primordial germ cells.</title>
        <authorList>
            <person name="Butuci M."/>
            <person name="Williams A.B."/>
            <person name="Wong M.M."/>
            <person name="Kramer B."/>
            <person name="Michael W.M."/>
        </authorList>
    </citation>
    <scope>FUNCTION</scope>
    <scope>SUBCELLULAR LOCATION</scope>
    <scope>TISSUE SPECIFICITY</scope>
    <scope>DISRUPTION PHENOTYPE</scope>
    <scope>PHOSPHORYLATION AT SER-344</scope>
</reference>
<reference key="5">
    <citation type="journal article" date="2016" name="J. Cell Biol.">
        <title>LINC complexes promote homologous recombination in part through inhibition of nonhomologous end joining.</title>
        <authorList>
            <person name="Lawrence K.S."/>
            <person name="Tapley E.C."/>
            <person name="Cruz V.E."/>
            <person name="Li Q."/>
            <person name="Aung K."/>
            <person name="Hart K.C."/>
            <person name="Schwartz T.U."/>
            <person name="Starr D.A."/>
            <person name="Engebrecht J."/>
        </authorList>
    </citation>
    <scope>FUNCTION</scope>
    <scope>DISRUPTION PHENOTYPE</scope>
</reference>
<comment type="function">
    <text evidence="5 6 7">Serine/threonine-protein kinase which is required for checkpoint-mediated cell cycle arrest and activation of DNA repair in response to the presence of DNA damage or unreplicated DNA (PubMed:15326393). May also negatively regulate cell cycle progression during unperturbed cell cycles (PubMed:15326393). Required for checkpoint mediated cell cycle arrest in response to DNA damage in germline cells (PubMed:15326393, PubMed:27956467). Delays cell-cycle reentry of the Z2 and Z3 primordial germ cells in response to transcription-induced DNA damage as they emerge from cell cycle arrest in L1 larvae (PubMed:26073019). Essential for embryogenesis (PubMed:15326393).</text>
</comment>
<comment type="catalytic activity">
    <reaction>
        <text>L-seryl-[protein] + ATP = O-phospho-L-seryl-[protein] + ADP + H(+)</text>
        <dbReference type="Rhea" id="RHEA:17989"/>
        <dbReference type="Rhea" id="RHEA-COMP:9863"/>
        <dbReference type="Rhea" id="RHEA-COMP:11604"/>
        <dbReference type="ChEBI" id="CHEBI:15378"/>
        <dbReference type="ChEBI" id="CHEBI:29999"/>
        <dbReference type="ChEBI" id="CHEBI:30616"/>
        <dbReference type="ChEBI" id="CHEBI:83421"/>
        <dbReference type="ChEBI" id="CHEBI:456216"/>
        <dbReference type="EC" id="2.7.11.1"/>
    </reaction>
</comment>
<comment type="catalytic activity">
    <reaction>
        <text>L-threonyl-[protein] + ATP = O-phospho-L-threonyl-[protein] + ADP + H(+)</text>
        <dbReference type="Rhea" id="RHEA:46608"/>
        <dbReference type="Rhea" id="RHEA-COMP:11060"/>
        <dbReference type="Rhea" id="RHEA-COMP:11605"/>
        <dbReference type="ChEBI" id="CHEBI:15378"/>
        <dbReference type="ChEBI" id="CHEBI:30013"/>
        <dbReference type="ChEBI" id="CHEBI:30616"/>
        <dbReference type="ChEBI" id="CHEBI:61977"/>
        <dbReference type="ChEBI" id="CHEBI:456216"/>
        <dbReference type="EC" id="2.7.11.1"/>
    </reaction>
</comment>
<comment type="subcellular location">
    <subcellularLocation>
        <location evidence="6">Cytoplasm</location>
    </subcellularLocation>
    <subcellularLocation>
        <location evidence="1">Nucleus</location>
    </subcellularLocation>
    <subcellularLocation>
        <location evidence="6">Cytoplasm</location>
        <location evidence="6">Perinuclear region</location>
    </subcellularLocation>
    <text evidence="6">The Ser-344 phosphorylated form colocalizes with P granules in a perinuclear manner in embryonic germline precursor cells and in Z2/Z3 primordial germ cells in L1 stage larvae.</text>
</comment>
<comment type="alternative products">
    <event type="alternative splicing"/>
    <isoform>
        <id>Q9N3Z3-1</id>
        <name evidence="9">a</name>
        <sequence type="displayed"/>
    </isoform>
    <isoform>
        <id>Q9N3Z3-2</id>
        <name evidence="10">b</name>
        <sequence type="described" ref="VSP_015771"/>
    </isoform>
</comment>
<comment type="tissue specificity">
    <text evidence="5 6">Expressed in the germline.</text>
</comment>
<comment type="developmental stage">
    <text evidence="5">Highly expressed in the embryo.</text>
</comment>
<comment type="disruption phenotype">
    <text evidence="6 7">RNAi-mediated knockdown leads to premature cell-cycle reentry of the Z2/Z3 primordial germ cells in L1 stage larvae (PubMed:26073019). RNAi-mediated knockdown and DNA damage induced by the ribonucleotide reductase inhibitor hydroxyurea in germ cells results in impaired DNA repair, but does allow for nuclear division (PubMed:27956467). In the proliferative zone of these germ cells, nuclei do not arrest following DNA damage, but prematurely divide and are smaller compared to wild-type (PubMed:27956467).</text>
</comment>
<comment type="similarity">
    <text evidence="8">Belongs to the protein kinase superfamily. CAMK Ser/Thr protein kinase family. NIM1 subfamily.</text>
</comment>
<comment type="sequence caution" evidence="8">
    <conflict type="frameshift">
        <sequence resource="EMBL-CDS" id="AAA93318"/>
    </conflict>
</comment>
<comment type="sequence caution" evidence="8">
    <conflict type="erroneous initiation">
        <sequence resource="EMBL-CDS" id="CCD73288"/>
    </conflict>
    <text>Truncated N-terminus.</text>
</comment>
<organism>
    <name type="scientific">Caenorhabditis elegans</name>
    <dbReference type="NCBI Taxonomy" id="6239"/>
    <lineage>
        <taxon>Eukaryota</taxon>
        <taxon>Metazoa</taxon>
        <taxon>Ecdysozoa</taxon>
        <taxon>Nematoda</taxon>
        <taxon>Chromadorea</taxon>
        <taxon>Rhabditida</taxon>
        <taxon>Rhabditina</taxon>
        <taxon>Rhabditomorpha</taxon>
        <taxon>Rhabditoidea</taxon>
        <taxon>Rhabditidae</taxon>
        <taxon>Peloderinae</taxon>
        <taxon>Caenorhabditis</taxon>
    </lineage>
</organism>
<evidence type="ECO:0000250" key="1">
    <source>
        <dbReference type="UniProtKB" id="O61661"/>
    </source>
</evidence>
<evidence type="ECO:0000255" key="2">
    <source>
        <dbReference type="PROSITE-ProRule" id="PRU00159"/>
    </source>
</evidence>
<evidence type="ECO:0000255" key="3">
    <source>
        <dbReference type="PROSITE-ProRule" id="PRU10027"/>
    </source>
</evidence>
<evidence type="ECO:0000256" key="4">
    <source>
        <dbReference type="SAM" id="MobiDB-lite"/>
    </source>
</evidence>
<evidence type="ECO:0000269" key="5">
    <source>
    </source>
</evidence>
<evidence type="ECO:0000269" key="6">
    <source>
    </source>
</evidence>
<evidence type="ECO:0000269" key="7">
    <source>
    </source>
</evidence>
<evidence type="ECO:0000305" key="8"/>
<evidence type="ECO:0000312" key="9">
    <source>
        <dbReference type="WormBase" id="Y39H10A.7a"/>
    </source>
</evidence>
<evidence type="ECO:0000312" key="10">
    <source>
        <dbReference type="WormBase" id="Y39H10A.7b"/>
    </source>
</evidence>
<name>CHK1_CAEEL</name>